<accession>B9DVI4</accession>
<dbReference type="EC" id="2.7.8.7" evidence="1"/>
<dbReference type="EMBL" id="AM946015">
    <property type="protein sequence ID" value="CAR43289.1"/>
    <property type="molecule type" value="Genomic_DNA"/>
</dbReference>
<dbReference type="RefSeq" id="WP_015911844.1">
    <property type="nucleotide sequence ID" value="NC_012004.1"/>
</dbReference>
<dbReference type="SMR" id="B9DVI4"/>
<dbReference type="STRING" id="218495.SUB1536"/>
<dbReference type="GeneID" id="93826854"/>
<dbReference type="KEGG" id="sub:SUB1536"/>
<dbReference type="eggNOG" id="COG0736">
    <property type="taxonomic scope" value="Bacteria"/>
</dbReference>
<dbReference type="HOGENOM" id="CLU_089696_1_2_9"/>
<dbReference type="OrthoDB" id="517356at2"/>
<dbReference type="Proteomes" id="UP000000449">
    <property type="component" value="Chromosome"/>
</dbReference>
<dbReference type="GO" id="GO:0005737">
    <property type="term" value="C:cytoplasm"/>
    <property type="evidence" value="ECO:0007669"/>
    <property type="project" value="UniProtKB-SubCell"/>
</dbReference>
<dbReference type="GO" id="GO:0008897">
    <property type="term" value="F:holo-[acyl-carrier-protein] synthase activity"/>
    <property type="evidence" value="ECO:0007669"/>
    <property type="project" value="UniProtKB-UniRule"/>
</dbReference>
<dbReference type="GO" id="GO:0000287">
    <property type="term" value="F:magnesium ion binding"/>
    <property type="evidence" value="ECO:0007669"/>
    <property type="project" value="UniProtKB-UniRule"/>
</dbReference>
<dbReference type="GO" id="GO:0006633">
    <property type="term" value="P:fatty acid biosynthetic process"/>
    <property type="evidence" value="ECO:0007669"/>
    <property type="project" value="UniProtKB-UniRule"/>
</dbReference>
<dbReference type="Gene3D" id="3.90.470.20">
    <property type="entry name" value="4'-phosphopantetheinyl transferase domain"/>
    <property type="match status" value="1"/>
</dbReference>
<dbReference type="HAMAP" id="MF_00101">
    <property type="entry name" value="AcpS"/>
    <property type="match status" value="1"/>
</dbReference>
<dbReference type="InterPro" id="IPR008278">
    <property type="entry name" value="4-PPantetheinyl_Trfase_dom"/>
</dbReference>
<dbReference type="InterPro" id="IPR037143">
    <property type="entry name" value="4-PPantetheinyl_Trfase_dom_sf"/>
</dbReference>
<dbReference type="InterPro" id="IPR002582">
    <property type="entry name" value="ACPS"/>
</dbReference>
<dbReference type="InterPro" id="IPR004568">
    <property type="entry name" value="Ppantetheine-prot_Trfase_dom"/>
</dbReference>
<dbReference type="NCBIfam" id="TIGR00516">
    <property type="entry name" value="acpS"/>
    <property type="match status" value="1"/>
</dbReference>
<dbReference type="NCBIfam" id="TIGR00556">
    <property type="entry name" value="pantethn_trn"/>
    <property type="match status" value="1"/>
</dbReference>
<dbReference type="Pfam" id="PF01648">
    <property type="entry name" value="ACPS"/>
    <property type="match status" value="1"/>
</dbReference>
<dbReference type="SUPFAM" id="SSF56214">
    <property type="entry name" value="4'-phosphopantetheinyl transferase"/>
    <property type="match status" value="1"/>
</dbReference>
<reference key="1">
    <citation type="journal article" date="2009" name="BMC Genomics">
        <title>Evidence for niche adaptation in the genome of the bovine pathogen Streptococcus uberis.</title>
        <authorList>
            <person name="Ward P.N."/>
            <person name="Holden M.T.G."/>
            <person name="Leigh J.A."/>
            <person name="Lennard N."/>
            <person name="Bignell A."/>
            <person name="Barron A."/>
            <person name="Clark L."/>
            <person name="Quail M.A."/>
            <person name="Woodward J."/>
            <person name="Barrell B.G."/>
            <person name="Egan S.A."/>
            <person name="Field T.R."/>
            <person name="Maskell D."/>
            <person name="Kehoe M."/>
            <person name="Dowson C.G."/>
            <person name="Chanter N."/>
            <person name="Whatmore A.M."/>
            <person name="Bentley S.D."/>
            <person name="Parkhill J."/>
        </authorList>
    </citation>
    <scope>NUCLEOTIDE SEQUENCE [LARGE SCALE GENOMIC DNA]</scope>
    <source>
        <strain>ATCC BAA-854 / 0140J</strain>
    </source>
</reference>
<protein>
    <recommendedName>
        <fullName evidence="1">Holo-[acyl-carrier-protein] synthase</fullName>
        <shortName evidence="1">Holo-ACP synthase</shortName>
        <ecNumber evidence="1">2.7.8.7</ecNumber>
    </recommendedName>
    <alternativeName>
        <fullName evidence="1">4'-phosphopantetheinyl transferase AcpS</fullName>
    </alternativeName>
</protein>
<feature type="chain" id="PRO_1000118829" description="Holo-[acyl-carrier-protein] synthase">
    <location>
        <begin position="1"/>
        <end position="118"/>
    </location>
</feature>
<feature type="binding site" evidence="1">
    <location>
        <position position="8"/>
    </location>
    <ligand>
        <name>Mg(2+)</name>
        <dbReference type="ChEBI" id="CHEBI:18420"/>
    </ligand>
</feature>
<feature type="binding site" evidence="1">
    <location>
        <position position="58"/>
    </location>
    <ligand>
        <name>Mg(2+)</name>
        <dbReference type="ChEBI" id="CHEBI:18420"/>
    </ligand>
</feature>
<comment type="function">
    <text evidence="1">Transfers the 4'-phosphopantetheine moiety from coenzyme A to a Ser of acyl-carrier-protein.</text>
</comment>
<comment type="catalytic activity">
    <reaction evidence="1">
        <text>apo-[ACP] + CoA = holo-[ACP] + adenosine 3',5'-bisphosphate + H(+)</text>
        <dbReference type="Rhea" id="RHEA:12068"/>
        <dbReference type="Rhea" id="RHEA-COMP:9685"/>
        <dbReference type="Rhea" id="RHEA-COMP:9690"/>
        <dbReference type="ChEBI" id="CHEBI:15378"/>
        <dbReference type="ChEBI" id="CHEBI:29999"/>
        <dbReference type="ChEBI" id="CHEBI:57287"/>
        <dbReference type="ChEBI" id="CHEBI:58343"/>
        <dbReference type="ChEBI" id="CHEBI:64479"/>
        <dbReference type="EC" id="2.7.8.7"/>
    </reaction>
</comment>
<comment type="cofactor">
    <cofactor evidence="1">
        <name>Mg(2+)</name>
        <dbReference type="ChEBI" id="CHEBI:18420"/>
    </cofactor>
</comment>
<comment type="subcellular location">
    <subcellularLocation>
        <location evidence="1">Cytoplasm</location>
    </subcellularLocation>
</comment>
<comment type="similarity">
    <text evidence="1">Belongs to the P-Pant transferase superfamily. AcpS family.</text>
</comment>
<name>ACPS_STRU0</name>
<evidence type="ECO:0000255" key="1">
    <source>
        <dbReference type="HAMAP-Rule" id="MF_00101"/>
    </source>
</evidence>
<gene>
    <name evidence="1" type="primary">acpS</name>
    <name type="ordered locus">SUB1536</name>
</gene>
<organism>
    <name type="scientific">Streptococcus uberis (strain ATCC BAA-854 / 0140J)</name>
    <dbReference type="NCBI Taxonomy" id="218495"/>
    <lineage>
        <taxon>Bacteria</taxon>
        <taxon>Bacillati</taxon>
        <taxon>Bacillota</taxon>
        <taxon>Bacilli</taxon>
        <taxon>Lactobacillales</taxon>
        <taxon>Streptococcaceae</taxon>
        <taxon>Streptococcus</taxon>
    </lineage>
</organism>
<proteinExistence type="inferred from homology"/>
<sequence length="118" mass="13271">MIIGHGIDLQEISAVEKAYKRQPRFAQKVLTQKEFDIFEAYKGKRQISYLAGRWSAKEAFAKAMGTGIGNLSFQDIEVLSDEKGKPFINRSPFTGKAWISISHSGDFVQSSVILEEEK</sequence>
<keyword id="KW-0963">Cytoplasm</keyword>
<keyword id="KW-0275">Fatty acid biosynthesis</keyword>
<keyword id="KW-0276">Fatty acid metabolism</keyword>
<keyword id="KW-0444">Lipid biosynthesis</keyword>
<keyword id="KW-0443">Lipid metabolism</keyword>
<keyword id="KW-0460">Magnesium</keyword>
<keyword id="KW-0479">Metal-binding</keyword>
<keyword id="KW-1185">Reference proteome</keyword>
<keyword id="KW-0808">Transferase</keyword>